<accession>O05946</accession>
<evidence type="ECO:0000305" key="1"/>
<protein>
    <recommendedName>
        <fullName>Phosphoribosylaminoimidazole-succinocarboxamide synthase</fullName>
        <ecNumber>6.3.2.6</ecNumber>
    </recommendedName>
    <alternativeName>
        <fullName>SAICAR synthetase</fullName>
    </alternativeName>
</protein>
<organism>
    <name type="scientific">Rickettsia prowazekii (strain Madrid E)</name>
    <dbReference type="NCBI Taxonomy" id="272947"/>
    <lineage>
        <taxon>Bacteria</taxon>
        <taxon>Pseudomonadati</taxon>
        <taxon>Pseudomonadota</taxon>
        <taxon>Alphaproteobacteria</taxon>
        <taxon>Rickettsiales</taxon>
        <taxon>Rickettsiaceae</taxon>
        <taxon>Rickettsieae</taxon>
        <taxon>Rickettsia</taxon>
        <taxon>typhus group</taxon>
    </lineage>
</organism>
<dbReference type="EC" id="6.3.2.6"/>
<dbReference type="EMBL" id="Y11780">
    <property type="protein sequence ID" value="CAA72468.1"/>
    <property type="molecule type" value="Genomic_DNA"/>
</dbReference>
<dbReference type="EMBL" id="AJ235270">
    <property type="protein sequence ID" value="CAA14683.1"/>
    <property type="molecule type" value="Genomic_DNA"/>
</dbReference>
<dbReference type="PIR" id="D71733">
    <property type="entry name" value="D71733"/>
</dbReference>
<dbReference type="RefSeq" id="NP_220606.1">
    <property type="nucleotide sequence ID" value="NC_000963.1"/>
</dbReference>
<dbReference type="RefSeq" id="WP_004596020.1">
    <property type="nucleotide sequence ID" value="NC_000963.1"/>
</dbReference>
<dbReference type="SMR" id="O05946"/>
<dbReference type="STRING" id="272947.gene:17555301"/>
<dbReference type="EnsemblBacteria" id="CAA14683">
    <property type="protein sequence ID" value="CAA14683"/>
    <property type="gene ID" value="CAA14683"/>
</dbReference>
<dbReference type="KEGG" id="rpr:RP220"/>
<dbReference type="PATRIC" id="fig|272947.5.peg.227"/>
<dbReference type="eggNOG" id="COG0152">
    <property type="taxonomic scope" value="Bacteria"/>
</dbReference>
<dbReference type="HOGENOM" id="CLU_061495_2_0_5"/>
<dbReference type="OrthoDB" id="9801549at2"/>
<dbReference type="UniPathway" id="UPA00074">
    <property type="reaction ID" value="UER00131"/>
</dbReference>
<dbReference type="Proteomes" id="UP000002480">
    <property type="component" value="Chromosome"/>
</dbReference>
<dbReference type="GO" id="GO:0005829">
    <property type="term" value="C:cytosol"/>
    <property type="evidence" value="ECO:0007669"/>
    <property type="project" value="TreeGrafter"/>
</dbReference>
<dbReference type="GO" id="GO:0005524">
    <property type="term" value="F:ATP binding"/>
    <property type="evidence" value="ECO:0007669"/>
    <property type="project" value="UniProtKB-KW"/>
</dbReference>
<dbReference type="GO" id="GO:0004639">
    <property type="term" value="F:phosphoribosylaminoimidazolesuccinocarboxamide synthase activity"/>
    <property type="evidence" value="ECO:0007669"/>
    <property type="project" value="UniProtKB-UniRule"/>
</dbReference>
<dbReference type="GO" id="GO:0006189">
    <property type="term" value="P:'de novo' IMP biosynthetic process"/>
    <property type="evidence" value="ECO:0007669"/>
    <property type="project" value="UniProtKB-UniRule"/>
</dbReference>
<dbReference type="GO" id="GO:0009236">
    <property type="term" value="P:cobalamin biosynthetic process"/>
    <property type="evidence" value="ECO:0007669"/>
    <property type="project" value="InterPro"/>
</dbReference>
<dbReference type="CDD" id="cd01415">
    <property type="entry name" value="SAICAR_synt_PurC"/>
    <property type="match status" value="1"/>
</dbReference>
<dbReference type="Gene3D" id="3.30.470.20">
    <property type="entry name" value="ATP-grasp fold, B domain"/>
    <property type="match status" value="1"/>
</dbReference>
<dbReference type="Gene3D" id="3.30.200.20">
    <property type="entry name" value="Phosphorylase Kinase, domain 1"/>
    <property type="match status" value="1"/>
</dbReference>
<dbReference type="HAMAP" id="MF_00137">
    <property type="entry name" value="SAICAR_synth"/>
    <property type="match status" value="1"/>
</dbReference>
<dbReference type="InterPro" id="IPR028923">
    <property type="entry name" value="SAICAR_synt/ADE2_N"/>
</dbReference>
<dbReference type="InterPro" id="IPR033934">
    <property type="entry name" value="SAICAR_synt_PurC"/>
</dbReference>
<dbReference type="InterPro" id="IPR050089">
    <property type="entry name" value="SAICAR_synthetase"/>
</dbReference>
<dbReference type="PANTHER" id="PTHR43599">
    <property type="entry name" value="MULTIFUNCTIONAL PROTEIN ADE2"/>
    <property type="match status" value="1"/>
</dbReference>
<dbReference type="PANTHER" id="PTHR43599:SF3">
    <property type="entry name" value="SI:DKEY-6E2.2"/>
    <property type="match status" value="1"/>
</dbReference>
<dbReference type="Pfam" id="PF01259">
    <property type="entry name" value="SAICAR_synt"/>
    <property type="match status" value="1"/>
</dbReference>
<dbReference type="SUPFAM" id="SSF56104">
    <property type="entry name" value="SAICAR synthase-like"/>
    <property type="match status" value="1"/>
</dbReference>
<feature type="chain" id="PRO_0000100864" description="Phosphoribosylaminoimidazole-succinocarboxamide synthase">
    <location>
        <begin position="1"/>
        <end position="236"/>
    </location>
</feature>
<sequence length="236" mass="27311">MKKKLYEGSSKILYSAEEDFLLIMAFSDKAVLETGETVDISGKGVLNNNISSFLMDKLEMIGIENHLIEKINMREQLIQYVEVFPIQVIISSVACGRFVKEFGMDEGYVFDKPIIDFKVRSREFNYPIVNEYQISNFGWLTMDEIRIVKAQTLRIYDFLSGLFIGIGIRLVECKLEFGRVFNGEESIIMLTDEISPDNCRLWHINSNEKLGFELIQNEPNKAFESYQLIANRLKEK</sequence>
<comment type="catalytic activity">
    <reaction>
        <text>5-amino-1-(5-phospho-D-ribosyl)imidazole-4-carboxylate + L-aspartate + ATP = (2S)-2-[5-amino-1-(5-phospho-beta-D-ribosyl)imidazole-4-carboxamido]succinate + ADP + phosphate + 2 H(+)</text>
        <dbReference type="Rhea" id="RHEA:22628"/>
        <dbReference type="ChEBI" id="CHEBI:15378"/>
        <dbReference type="ChEBI" id="CHEBI:29991"/>
        <dbReference type="ChEBI" id="CHEBI:30616"/>
        <dbReference type="ChEBI" id="CHEBI:43474"/>
        <dbReference type="ChEBI" id="CHEBI:58443"/>
        <dbReference type="ChEBI" id="CHEBI:77657"/>
        <dbReference type="ChEBI" id="CHEBI:456216"/>
        <dbReference type="EC" id="6.3.2.6"/>
    </reaction>
</comment>
<comment type="pathway">
    <text>Purine metabolism; IMP biosynthesis via de novo pathway; 5-amino-1-(5-phospho-D-ribosyl)imidazole-4-carboxamide from 5-amino-1-(5-phospho-D-ribosyl)imidazole-4-carboxylate: step 1/2.</text>
</comment>
<comment type="similarity">
    <text evidence="1">Belongs to the SAICAR synthetase family.</text>
</comment>
<proteinExistence type="inferred from homology"/>
<name>PUR7_RICPR</name>
<keyword id="KW-0067">ATP-binding</keyword>
<keyword id="KW-0436">Ligase</keyword>
<keyword id="KW-0547">Nucleotide-binding</keyword>
<keyword id="KW-0658">Purine biosynthesis</keyword>
<keyword id="KW-1185">Reference proteome</keyword>
<reference key="1">
    <citation type="journal article" date="1997" name="Microbiology">
        <title>Genomic rearrangements during evolution of the obligate intracellular parasite Rickettsia prowazekii as inferred from an analysis of 52015 bp nucleotide sequence.</title>
        <authorList>
            <person name="Andersson J.O."/>
            <person name="Andersson S.G.E."/>
        </authorList>
    </citation>
    <scope>NUCLEOTIDE SEQUENCE [GENOMIC DNA]</scope>
    <source>
        <strain>Madrid E</strain>
    </source>
</reference>
<reference key="2">
    <citation type="journal article" date="1998" name="Nature">
        <title>The genome sequence of Rickettsia prowazekii and the origin of mitochondria.</title>
        <authorList>
            <person name="Andersson S.G.E."/>
            <person name="Zomorodipour A."/>
            <person name="Andersson J.O."/>
            <person name="Sicheritz-Ponten T."/>
            <person name="Alsmark U.C.M."/>
            <person name="Podowski R.M."/>
            <person name="Naeslund A.K."/>
            <person name="Eriksson A.-S."/>
            <person name="Winkler H.H."/>
            <person name="Kurland C.G."/>
        </authorList>
    </citation>
    <scope>NUCLEOTIDE SEQUENCE [LARGE SCALE GENOMIC DNA]</scope>
    <source>
        <strain>Madrid E</strain>
    </source>
</reference>
<gene>
    <name type="primary">purC</name>
    <name type="ordered locus">RP220</name>
</gene>